<evidence type="ECO:0000255" key="1">
    <source>
        <dbReference type="PROSITE-ProRule" id="PRU00108"/>
    </source>
</evidence>
<evidence type="ECO:0000269" key="2">
    <source>
    </source>
</evidence>
<evidence type="ECO:0000305" key="3"/>
<evidence type="ECO:0000312" key="4">
    <source>
        <dbReference type="EMBL" id="AAL71873.1"/>
    </source>
</evidence>
<proteinExistence type="evidence at transcript level"/>
<name>UBX_JUNCO</name>
<gene>
    <name type="primary">Ubx</name>
</gene>
<accession>Q8T940</accession>
<sequence>MNSYFEQGGFYGAHGVHQGGGGGDQYRGFPLGLTYAQPHALHQPRPQDSPYDASVAAACKLYAGEQQYAKADCSKAGGEQQNGYGGKEAWGSGLGALVRPAACTPEARYSESSSPGRALPWGNQCALPGAAASAQPVQHQPTNHTFYPWMAIAGANGLRRRGRQTYTRYQTLELEKEFHTNHYLTRRRRIEMAHALCLTERQIKIWFQNRRMKLKKEIQAIKELNEQEKQAQAQKAAAAAAAAAAAAQGHPEH</sequence>
<keyword id="KW-0010">Activator</keyword>
<keyword id="KW-0217">Developmental protein</keyword>
<keyword id="KW-0238">DNA-binding</keyword>
<keyword id="KW-0371">Homeobox</keyword>
<keyword id="KW-0539">Nucleus</keyword>
<keyword id="KW-0678">Repressor</keyword>
<keyword id="KW-0804">Transcription</keyword>
<keyword id="KW-0805">Transcription regulation</keyword>
<reference evidence="3" key="1">
    <citation type="journal article" date="2002" name="Nature">
        <title>Evolution of a transcriptional repression domain in an insect Hox protein.</title>
        <authorList>
            <person name="Galant R."/>
            <person name="Carroll S.B."/>
        </authorList>
    </citation>
    <scope>NUCLEOTIDE SEQUENCE [MRNA]</scope>
</reference>
<reference evidence="3" key="2">
    <citation type="journal article" date="1994" name="Nature">
        <title>Evolution of homeotic gene regulation and function in flies and butterflies.</title>
        <authorList>
            <person name="Warren R.W."/>
            <person name="Nagy L."/>
            <person name="Selegue J."/>
            <person name="Gates J."/>
            <person name="Carroll S.B."/>
        </authorList>
    </citation>
    <scope>FUNCTION</scope>
    <scope>SUBCELLULAR LOCATION</scope>
    <scope>TISSUE SPECIFICITY</scope>
</reference>
<organism evidence="4">
    <name type="scientific">Junonia coenia</name>
    <name type="common">Peacock butterfly</name>
    <name type="synonym">Precis coenia</name>
    <dbReference type="NCBI Taxonomy" id="39708"/>
    <lineage>
        <taxon>Eukaryota</taxon>
        <taxon>Metazoa</taxon>
        <taxon>Ecdysozoa</taxon>
        <taxon>Arthropoda</taxon>
        <taxon>Hexapoda</taxon>
        <taxon>Insecta</taxon>
        <taxon>Pterygota</taxon>
        <taxon>Neoptera</taxon>
        <taxon>Endopterygota</taxon>
        <taxon>Lepidoptera</taxon>
        <taxon>Glossata</taxon>
        <taxon>Ditrysia</taxon>
        <taxon>Papilionoidea</taxon>
        <taxon>Nymphalidae</taxon>
        <taxon>Nymphalinae</taxon>
        <taxon>Junonia</taxon>
    </lineage>
</organism>
<comment type="function">
    <text evidence="2">Sequence-specific transcription factor which is part of a developmental regulatory system that provides cells with specific positional identities on the anterior-posterior axis. Binds the consensus region 5'-TTAAT[GT][GA]-3'. This homeotic protein controls development of the cells in the posterior thoracic and first abdominal segments.</text>
</comment>
<comment type="subcellular location">
    <subcellularLocation>
        <location evidence="1 2">Nucleus</location>
    </subcellularLocation>
</comment>
<comment type="tissue specificity">
    <text evidence="2">In the embryo (at 20% embryogenesis), expression is highest in the first abdominal segment (A1) with significant but diminishing levels in more posterior thoracic segments (T1 and T3).</text>
</comment>
<comment type="domain">
    <text>The QA motif is able to mediate transcriptional repression.</text>
</comment>
<comment type="similarity">
    <text evidence="3">Belongs to the Antp homeobox family.</text>
</comment>
<dbReference type="EMBL" id="AY074760">
    <property type="protein sequence ID" value="AAL71873.1"/>
    <property type="molecule type" value="mRNA"/>
</dbReference>
<dbReference type="SMR" id="Q8T940"/>
<dbReference type="GO" id="GO:0005634">
    <property type="term" value="C:nucleus"/>
    <property type="evidence" value="ECO:0000314"/>
    <property type="project" value="UniProtKB"/>
</dbReference>
<dbReference type="GO" id="GO:0003700">
    <property type="term" value="F:DNA-binding transcription factor activity"/>
    <property type="evidence" value="ECO:0000314"/>
    <property type="project" value="UniProtKB"/>
</dbReference>
<dbReference type="GO" id="GO:0000981">
    <property type="term" value="F:DNA-binding transcription factor activity, RNA polymerase II-specific"/>
    <property type="evidence" value="ECO:0007669"/>
    <property type="project" value="InterPro"/>
</dbReference>
<dbReference type="GO" id="GO:0000978">
    <property type="term" value="F:RNA polymerase II cis-regulatory region sequence-specific DNA binding"/>
    <property type="evidence" value="ECO:0007669"/>
    <property type="project" value="TreeGrafter"/>
</dbReference>
<dbReference type="GO" id="GO:0009952">
    <property type="term" value="P:anterior/posterior pattern specification"/>
    <property type="evidence" value="ECO:0007669"/>
    <property type="project" value="TreeGrafter"/>
</dbReference>
<dbReference type="GO" id="GO:0000122">
    <property type="term" value="P:negative regulation of transcription by RNA polymerase II"/>
    <property type="evidence" value="ECO:0007669"/>
    <property type="project" value="TreeGrafter"/>
</dbReference>
<dbReference type="GO" id="GO:0006355">
    <property type="term" value="P:regulation of DNA-templated transcription"/>
    <property type="evidence" value="ECO:0000304"/>
    <property type="project" value="UniProtKB"/>
</dbReference>
<dbReference type="CDD" id="cd00086">
    <property type="entry name" value="homeodomain"/>
    <property type="match status" value="1"/>
</dbReference>
<dbReference type="FunFam" id="1.10.10.60:FF:000193">
    <property type="entry name" value="Ultrabithorax, isoform C"/>
    <property type="match status" value="1"/>
</dbReference>
<dbReference type="Gene3D" id="1.10.10.60">
    <property type="entry name" value="Homeodomain-like"/>
    <property type="match status" value="1"/>
</dbReference>
<dbReference type="InterPro" id="IPR050296">
    <property type="entry name" value="Antp_homeobox"/>
</dbReference>
<dbReference type="InterPro" id="IPR001356">
    <property type="entry name" value="HD"/>
</dbReference>
<dbReference type="InterPro" id="IPR020479">
    <property type="entry name" value="HD_metazoa"/>
</dbReference>
<dbReference type="InterPro" id="IPR001827">
    <property type="entry name" value="Homeobox_Antennapedia_CS"/>
</dbReference>
<dbReference type="InterPro" id="IPR017970">
    <property type="entry name" value="Homeobox_CS"/>
</dbReference>
<dbReference type="InterPro" id="IPR009057">
    <property type="entry name" value="Homeodomain-like_sf"/>
</dbReference>
<dbReference type="PANTHER" id="PTHR45659">
    <property type="entry name" value="HOMEOBOX PROTEIN HOX"/>
    <property type="match status" value="1"/>
</dbReference>
<dbReference type="PANTHER" id="PTHR45659:SF21">
    <property type="entry name" value="HOMEOTIC PROTEIN ULTRABITHORAX"/>
    <property type="match status" value="1"/>
</dbReference>
<dbReference type="Pfam" id="PF00046">
    <property type="entry name" value="Homeodomain"/>
    <property type="match status" value="1"/>
</dbReference>
<dbReference type="PRINTS" id="PR00024">
    <property type="entry name" value="HOMEOBOX"/>
</dbReference>
<dbReference type="SMART" id="SM00389">
    <property type="entry name" value="HOX"/>
    <property type="match status" value="1"/>
</dbReference>
<dbReference type="SUPFAM" id="SSF46689">
    <property type="entry name" value="Homeodomain-like"/>
    <property type="match status" value="1"/>
</dbReference>
<dbReference type="PROSITE" id="PS00032">
    <property type="entry name" value="ANTENNAPEDIA"/>
    <property type="match status" value="1"/>
</dbReference>
<dbReference type="PROSITE" id="PS00027">
    <property type="entry name" value="HOMEOBOX_1"/>
    <property type="match status" value="1"/>
</dbReference>
<dbReference type="PROSITE" id="PS50071">
    <property type="entry name" value="HOMEOBOX_2"/>
    <property type="match status" value="1"/>
</dbReference>
<feature type="chain" id="PRO_0000200272" description="Homeotic protein ultrabithorax">
    <location>
        <begin position="1"/>
        <end position="253"/>
    </location>
</feature>
<feature type="DNA-binding region" description="Homeobox" evidence="1">
    <location>
        <begin position="159"/>
        <end position="218"/>
    </location>
</feature>
<feature type="short sequence motif" description="Antp-type hexapeptide">
    <location>
        <begin position="146"/>
        <end position="151"/>
    </location>
</feature>
<feature type="short sequence motif" description="QA">
    <location>
        <begin position="232"/>
        <end position="247"/>
    </location>
</feature>
<protein>
    <recommendedName>
        <fullName>Homeotic protein ultrabithorax</fullName>
    </recommendedName>
    <alternativeName>
        <fullName>JcUbx</fullName>
    </alternativeName>
</protein>